<protein>
    <recommendedName>
        <fullName evidence="1">Glycine dehydrogenase (decarboxylating)</fullName>
        <ecNumber evidence="1">1.4.4.2</ecNumber>
    </recommendedName>
    <alternativeName>
        <fullName evidence="1">Glycine cleavage system P-protein</fullName>
    </alternativeName>
    <alternativeName>
        <fullName evidence="1">Glycine decarboxylase</fullName>
    </alternativeName>
    <alternativeName>
        <fullName evidence="1">Glycine dehydrogenase (aminomethyl-transferring)</fullName>
    </alternativeName>
</protein>
<feature type="chain" id="PRO_1000045571" description="Glycine dehydrogenase (decarboxylating)">
    <location>
        <begin position="1"/>
        <end position="975"/>
    </location>
</feature>
<feature type="modified residue" description="N6-(pyridoxal phosphate)lysine" evidence="1">
    <location>
        <position position="723"/>
    </location>
</feature>
<comment type="function">
    <text evidence="1">The glycine cleavage system catalyzes the degradation of glycine. The P protein binds the alpha-amino group of glycine through its pyridoxal phosphate cofactor; CO(2) is released and the remaining methylamine moiety is then transferred to the lipoamide cofactor of the H protein.</text>
</comment>
<comment type="catalytic activity">
    <reaction evidence="1">
        <text>N(6)-[(R)-lipoyl]-L-lysyl-[glycine-cleavage complex H protein] + glycine + H(+) = N(6)-[(R)-S(8)-aminomethyldihydrolipoyl]-L-lysyl-[glycine-cleavage complex H protein] + CO2</text>
        <dbReference type="Rhea" id="RHEA:24304"/>
        <dbReference type="Rhea" id="RHEA-COMP:10494"/>
        <dbReference type="Rhea" id="RHEA-COMP:10495"/>
        <dbReference type="ChEBI" id="CHEBI:15378"/>
        <dbReference type="ChEBI" id="CHEBI:16526"/>
        <dbReference type="ChEBI" id="CHEBI:57305"/>
        <dbReference type="ChEBI" id="CHEBI:83099"/>
        <dbReference type="ChEBI" id="CHEBI:83143"/>
        <dbReference type="EC" id="1.4.4.2"/>
    </reaction>
</comment>
<comment type="cofactor">
    <cofactor evidence="1">
        <name>pyridoxal 5'-phosphate</name>
        <dbReference type="ChEBI" id="CHEBI:597326"/>
    </cofactor>
</comment>
<comment type="subunit">
    <text evidence="1">The glycine cleavage system is composed of four proteins: P, T, L and H.</text>
</comment>
<comment type="similarity">
    <text evidence="1">Belongs to the GcvP family.</text>
</comment>
<reference key="1">
    <citation type="journal article" date="2010" name="Genome Biol. Evol.">
        <title>Continuing evolution of Burkholderia mallei through genome reduction and large-scale rearrangements.</title>
        <authorList>
            <person name="Losada L."/>
            <person name="Ronning C.M."/>
            <person name="DeShazer D."/>
            <person name="Woods D."/>
            <person name="Fedorova N."/>
            <person name="Kim H.S."/>
            <person name="Shabalina S.A."/>
            <person name="Pearson T.R."/>
            <person name="Brinkac L."/>
            <person name="Tan P."/>
            <person name="Nandi T."/>
            <person name="Crabtree J."/>
            <person name="Badger J."/>
            <person name="Beckstrom-Sternberg S."/>
            <person name="Saqib M."/>
            <person name="Schutzer S.E."/>
            <person name="Keim P."/>
            <person name="Nierman W.C."/>
        </authorList>
    </citation>
    <scope>NUCLEOTIDE SEQUENCE [LARGE SCALE GENOMIC DNA]</scope>
    <source>
        <strain>NCTC 10247</strain>
    </source>
</reference>
<organism>
    <name type="scientific">Burkholderia mallei (strain NCTC 10247)</name>
    <dbReference type="NCBI Taxonomy" id="320389"/>
    <lineage>
        <taxon>Bacteria</taxon>
        <taxon>Pseudomonadati</taxon>
        <taxon>Pseudomonadota</taxon>
        <taxon>Betaproteobacteria</taxon>
        <taxon>Burkholderiales</taxon>
        <taxon>Burkholderiaceae</taxon>
        <taxon>Burkholderia</taxon>
        <taxon>pseudomallei group</taxon>
    </lineage>
</organism>
<dbReference type="EC" id="1.4.4.2" evidence="1"/>
<dbReference type="EMBL" id="CP000548">
    <property type="protein sequence ID" value="ABO07313.1"/>
    <property type="molecule type" value="Genomic_DNA"/>
</dbReference>
<dbReference type="RefSeq" id="WP_004195877.1">
    <property type="nucleotide sequence ID" value="NZ_CP007802.1"/>
</dbReference>
<dbReference type="SMR" id="A3MQP3"/>
<dbReference type="GeneID" id="92980672"/>
<dbReference type="KEGG" id="bmaz:BM44_298"/>
<dbReference type="KEGG" id="bmn:BMA10247_3058"/>
<dbReference type="PATRIC" id="fig|320389.8.peg.324"/>
<dbReference type="GO" id="GO:0005829">
    <property type="term" value="C:cytosol"/>
    <property type="evidence" value="ECO:0007669"/>
    <property type="project" value="TreeGrafter"/>
</dbReference>
<dbReference type="GO" id="GO:0005960">
    <property type="term" value="C:glycine cleavage complex"/>
    <property type="evidence" value="ECO:0007669"/>
    <property type="project" value="TreeGrafter"/>
</dbReference>
<dbReference type="GO" id="GO:0016594">
    <property type="term" value="F:glycine binding"/>
    <property type="evidence" value="ECO:0007669"/>
    <property type="project" value="TreeGrafter"/>
</dbReference>
<dbReference type="GO" id="GO:0004375">
    <property type="term" value="F:glycine dehydrogenase (decarboxylating) activity"/>
    <property type="evidence" value="ECO:0007669"/>
    <property type="project" value="UniProtKB-EC"/>
</dbReference>
<dbReference type="GO" id="GO:0030170">
    <property type="term" value="F:pyridoxal phosphate binding"/>
    <property type="evidence" value="ECO:0007669"/>
    <property type="project" value="TreeGrafter"/>
</dbReference>
<dbReference type="GO" id="GO:0019464">
    <property type="term" value="P:glycine decarboxylation via glycine cleavage system"/>
    <property type="evidence" value="ECO:0007669"/>
    <property type="project" value="UniProtKB-UniRule"/>
</dbReference>
<dbReference type="CDD" id="cd00613">
    <property type="entry name" value="GDC-P"/>
    <property type="match status" value="2"/>
</dbReference>
<dbReference type="FunFam" id="3.40.640.10:FF:000005">
    <property type="entry name" value="Glycine dehydrogenase (decarboxylating), mitochondrial"/>
    <property type="match status" value="1"/>
</dbReference>
<dbReference type="FunFam" id="3.90.1150.10:FF:000007">
    <property type="entry name" value="Glycine dehydrogenase (decarboxylating), mitochondrial"/>
    <property type="match status" value="1"/>
</dbReference>
<dbReference type="FunFam" id="3.40.640.10:FF:000007">
    <property type="entry name" value="glycine dehydrogenase (Decarboxylating), mitochondrial"/>
    <property type="match status" value="1"/>
</dbReference>
<dbReference type="Gene3D" id="3.90.1150.10">
    <property type="entry name" value="Aspartate Aminotransferase, domain 1"/>
    <property type="match status" value="2"/>
</dbReference>
<dbReference type="Gene3D" id="3.40.640.10">
    <property type="entry name" value="Type I PLP-dependent aspartate aminotransferase-like (Major domain)"/>
    <property type="match status" value="2"/>
</dbReference>
<dbReference type="HAMAP" id="MF_00711">
    <property type="entry name" value="GcvP"/>
    <property type="match status" value="1"/>
</dbReference>
<dbReference type="InterPro" id="IPR003437">
    <property type="entry name" value="GcvP"/>
</dbReference>
<dbReference type="InterPro" id="IPR049316">
    <property type="entry name" value="GDC-P_C"/>
</dbReference>
<dbReference type="InterPro" id="IPR049315">
    <property type="entry name" value="GDC-P_N"/>
</dbReference>
<dbReference type="InterPro" id="IPR020581">
    <property type="entry name" value="GDC_P"/>
</dbReference>
<dbReference type="InterPro" id="IPR015424">
    <property type="entry name" value="PyrdxlP-dep_Trfase"/>
</dbReference>
<dbReference type="InterPro" id="IPR015421">
    <property type="entry name" value="PyrdxlP-dep_Trfase_major"/>
</dbReference>
<dbReference type="InterPro" id="IPR015422">
    <property type="entry name" value="PyrdxlP-dep_Trfase_small"/>
</dbReference>
<dbReference type="NCBIfam" id="TIGR00461">
    <property type="entry name" value="gcvP"/>
    <property type="match status" value="1"/>
</dbReference>
<dbReference type="NCBIfam" id="NF003346">
    <property type="entry name" value="PRK04366.1"/>
    <property type="match status" value="1"/>
</dbReference>
<dbReference type="PANTHER" id="PTHR11773:SF1">
    <property type="entry name" value="GLYCINE DEHYDROGENASE (DECARBOXYLATING), MITOCHONDRIAL"/>
    <property type="match status" value="1"/>
</dbReference>
<dbReference type="PANTHER" id="PTHR11773">
    <property type="entry name" value="GLYCINE DEHYDROGENASE, DECARBOXYLATING"/>
    <property type="match status" value="1"/>
</dbReference>
<dbReference type="Pfam" id="PF21478">
    <property type="entry name" value="GcvP2_C"/>
    <property type="match status" value="1"/>
</dbReference>
<dbReference type="Pfam" id="PF02347">
    <property type="entry name" value="GDC-P"/>
    <property type="match status" value="2"/>
</dbReference>
<dbReference type="SUPFAM" id="SSF53383">
    <property type="entry name" value="PLP-dependent transferases"/>
    <property type="match status" value="2"/>
</dbReference>
<keyword id="KW-0560">Oxidoreductase</keyword>
<keyword id="KW-0663">Pyridoxal phosphate</keyword>
<evidence type="ECO:0000255" key="1">
    <source>
        <dbReference type="HAMAP-Rule" id="MF_00711"/>
    </source>
</evidence>
<accession>A3MQP3</accession>
<name>GCSP_BURM7</name>
<gene>
    <name evidence="1" type="primary">gcvP</name>
    <name type="ordered locus">BMA10247_3058</name>
</gene>
<sequence length="975" mass="104460">MKLEHPDRLMNRTPLSLAALETHDAFAERHIGPDAASQQAMLDTLGFATRAALIDAVIPASIRRAETLPLGPFAQPKSEAEALAALRALADKNQVFRSYIGQGYYDTHTPAVILRNVLENPAWYTAYTPYQPEISQGRLEALLNFQQMVADLTGLEISNASLLDEATAAAEAMTLLQRVGKPQSNVFYVADDVLPQTLEVIKTRAKPIGIEVKSGPAADAAAANAFGVLLQYPGANGDVRDYRALADAIHAAGGHVVVAADILALTVLMPPGEWGADVAVGNTQRFGVPMGFGGPHAAYMAVRDEFKRQMPGRLVGVTVDAQGKPALRLALQTREQHIRREKATSNVCTAQALLAIMASMYAVYHGPRGLKTIALRVNRIAALLAAGIRHLGYATVNDTFFDTLTIDTGARTAQLHAFAQAKRINLRRAGDTRVGVSVDETTTRADLADLLTIFAQAAGATAPDIDALDAGLLPAPALPPSLERTSAYLTHHVFNRHHSETEMLRYLRSLSDKDLALDRSMIPLGSCTMKLNATSEMLPVTWPEFGRIHPFAPAEQTVGYREMIDQLEQMLVAATGYAAVSLQPNAGSQGEYAGLLIIHAYHESRGESHRDVCLIPASAHGTNPASAHMAGMKVVVVACDAQGNVDIADLKAKADAHSHDLAAIMITYPSTHGVFEQNVREICEIVHAHGGQVYVDGANMNAMVGLTAPGQFGGDVSHLNLHKTFCIPHGGGGPGVGPVAVGPHLAKFLPNQRSTGYARGEDGIGAVSAAPYGSASILPISWMYIAMMGAKNLTAATETAILNANYIAKRLAPHYPVLYSGPGGLVAHECILDLRPIKDSSGITVDDVAKRLMDYGFHAPTMSFPVPGTLMVEPTESESQEELDRFIAAMIAIRDEIRAVEEGRADREDNPLRHAPHTAAVVTANEWPHAYSREQAAFPVASLVANKYWPPVGRADNAYGDRNLFCSCVPVSDYA</sequence>
<proteinExistence type="inferred from homology"/>